<dbReference type="EMBL" id="CP001080">
    <property type="protein sequence ID" value="ACD65835.1"/>
    <property type="molecule type" value="Genomic_DNA"/>
</dbReference>
<dbReference type="RefSeq" id="WP_012458925.1">
    <property type="nucleotide sequence ID" value="NC_010730.1"/>
</dbReference>
<dbReference type="SMR" id="B2V753"/>
<dbReference type="STRING" id="436114.SYO3AOP1_0190"/>
<dbReference type="KEGG" id="sul:SYO3AOP1_0190"/>
<dbReference type="eggNOG" id="COG0335">
    <property type="taxonomic scope" value="Bacteria"/>
</dbReference>
<dbReference type="HOGENOM" id="CLU_103507_2_2_0"/>
<dbReference type="GO" id="GO:0022625">
    <property type="term" value="C:cytosolic large ribosomal subunit"/>
    <property type="evidence" value="ECO:0007669"/>
    <property type="project" value="TreeGrafter"/>
</dbReference>
<dbReference type="GO" id="GO:0003735">
    <property type="term" value="F:structural constituent of ribosome"/>
    <property type="evidence" value="ECO:0007669"/>
    <property type="project" value="InterPro"/>
</dbReference>
<dbReference type="GO" id="GO:0006412">
    <property type="term" value="P:translation"/>
    <property type="evidence" value="ECO:0007669"/>
    <property type="project" value="UniProtKB-UniRule"/>
</dbReference>
<dbReference type="FunFam" id="2.30.30.790:FF:000001">
    <property type="entry name" value="50S ribosomal protein L19"/>
    <property type="match status" value="1"/>
</dbReference>
<dbReference type="Gene3D" id="2.30.30.790">
    <property type="match status" value="1"/>
</dbReference>
<dbReference type="HAMAP" id="MF_00402">
    <property type="entry name" value="Ribosomal_bL19"/>
    <property type="match status" value="1"/>
</dbReference>
<dbReference type="InterPro" id="IPR001857">
    <property type="entry name" value="Ribosomal_bL19"/>
</dbReference>
<dbReference type="InterPro" id="IPR018257">
    <property type="entry name" value="Ribosomal_bL19_CS"/>
</dbReference>
<dbReference type="InterPro" id="IPR038657">
    <property type="entry name" value="Ribosomal_bL19_sf"/>
</dbReference>
<dbReference type="InterPro" id="IPR008991">
    <property type="entry name" value="Translation_prot_SH3-like_sf"/>
</dbReference>
<dbReference type="NCBIfam" id="TIGR01024">
    <property type="entry name" value="rplS_bact"/>
    <property type="match status" value="1"/>
</dbReference>
<dbReference type="PANTHER" id="PTHR15680:SF9">
    <property type="entry name" value="LARGE RIBOSOMAL SUBUNIT PROTEIN BL19M"/>
    <property type="match status" value="1"/>
</dbReference>
<dbReference type="PANTHER" id="PTHR15680">
    <property type="entry name" value="RIBOSOMAL PROTEIN L19"/>
    <property type="match status" value="1"/>
</dbReference>
<dbReference type="Pfam" id="PF01245">
    <property type="entry name" value="Ribosomal_L19"/>
    <property type="match status" value="1"/>
</dbReference>
<dbReference type="PIRSF" id="PIRSF002191">
    <property type="entry name" value="Ribosomal_L19"/>
    <property type="match status" value="1"/>
</dbReference>
<dbReference type="PRINTS" id="PR00061">
    <property type="entry name" value="RIBOSOMALL19"/>
</dbReference>
<dbReference type="SUPFAM" id="SSF50104">
    <property type="entry name" value="Translation proteins SH3-like domain"/>
    <property type="match status" value="1"/>
</dbReference>
<dbReference type="PROSITE" id="PS01015">
    <property type="entry name" value="RIBOSOMAL_L19"/>
    <property type="match status" value="1"/>
</dbReference>
<organism>
    <name type="scientific">Sulfurihydrogenibium sp. (strain YO3AOP1)</name>
    <dbReference type="NCBI Taxonomy" id="436114"/>
    <lineage>
        <taxon>Bacteria</taxon>
        <taxon>Pseudomonadati</taxon>
        <taxon>Aquificota</taxon>
        <taxon>Aquificia</taxon>
        <taxon>Aquificales</taxon>
        <taxon>Hydrogenothermaceae</taxon>
        <taxon>Sulfurihydrogenibium</taxon>
    </lineage>
</organism>
<sequence>MHQLIREIEQKYLPQDIPEFKVGDTVRLHLKVKEGEKERTQIFEGLVIRVRGSGTGKTFTVRKVSYGVGMERIFPIACPSIQKIEVVKRGKVRRAKLYYIRNLKGKAAKIKELKEWEIKKRQAESQASKENNG</sequence>
<accession>B2V753</accession>
<protein>
    <recommendedName>
        <fullName evidence="1">Large ribosomal subunit protein bL19</fullName>
    </recommendedName>
    <alternativeName>
        <fullName evidence="2">50S ribosomal protein L19</fullName>
    </alternativeName>
</protein>
<gene>
    <name evidence="1" type="primary">rplS</name>
    <name type="ordered locus">SYO3AOP1_0190</name>
</gene>
<feature type="chain" id="PRO_1000193904" description="Large ribosomal subunit protein bL19">
    <location>
        <begin position="1"/>
        <end position="133"/>
    </location>
</feature>
<reference key="1">
    <citation type="journal article" date="2009" name="J. Bacteriol.">
        <title>Complete and draft genome sequences of six members of the Aquificales.</title>
        <authorList>
            <person name="Reysenbach A.-L."/>
            <person name="Hamamura N."/>
            <person name="Podar M."/>
            <person name="Griffiths E."/>
            <person name="Ferreira S."/>
            <person name="Hochstein R."/>
            <person name="Heidelberg J."/>
            <person name="Johnson J."/>
            <person name="Mead D."/>
            <person name="Pohorille A."/>
            <person name="Sarmiento M."/>
            <person name="Schweighofer K."/>
            <person name="Seshadri R."/>
            <person name="Voytek M.A."/>
        </authorList>
    </citation>
    <scope>NUCLEOTIDE SEQUENCE [LARGE SCALE GENOMIC DNA]</scope>
    <source>
        <strain>YO3AOP1</strain>
    </source>
</reference>
<keyword id="KW-0687">Ribonucleoprotein</keyword>
<keyword id="KW-0689">Ribosomal protein</keyword>
<name>RL19_SULSY</name>
<proteinExistence type="inferred from homology"/>
<comment type="function">
    <text evidence="1">This protein is located at the 30S-50S ribosomal subunit interface and may play a role in the structure and function of the aminoacyl-tRNA binding site.</text>
</comment>
<comment type="similarity">
    <text evidence="1">Belongs to the bacterial ribosomal protein bL19 family.</text>
</comment>
<evidence type="ECO:0000255" key="1">
    <source>
        <dbReference type="HAMAP-Rule" id="MF_00402"/>
    </source>
</evidence>
<evidence type="ECO:0000305" key="2"/>